<geneLocation type="plasmid">
    <name>ece1</name>
</geneLocation>
<evidence type="ECO:0000305" key="1"/>
<proteinExistence type="predicted"/>
<comment type="similarity">
    <text evidence="1">To A.aeolicus AA07 and AA34.</text>
</comment>
<organism>
    <name type="scientific">Aquifex aeolicus (strain VF5)</name>
    <dbReference type="NCBI Taxonomy" id="224324"/>
    <lineage>
        <taxon>Bacteria</taxon>
        <taxon>Pseudomonadati</taxon>
        <taxon>Aquificota</taxon>
        <taxon>Aquificia</taxon>
        <taxon>Aquificales</taxon>
        <taxon>Aquificaceae</taxon>
        <taxon>Aquifex</taxon>
    </lineage>
</organism>
<gene>
    <name type="ordered locus">aq_aa11</name>
</gene>
<feature type="chain" id="PRO_0000186985" description="Uncharacterized protein aq_aa11">
    <location>
        <begin position="1"/>
        <end position="318"/>
    </location>
</feature>
<keyword id="KW-0614">Plasmid</keyword>
<keyword id="KW-1185">Reference proteome</keyword>
<reference key="1">
    <citation type="journal article" date="1998" name="Nature">
        <title>The complete genome of the hyperthermophilic bacterium Aquifex aeolicus.</title>
        <authorList>
            <person name="Deckert G."/>
            <person name="Warren P.V."/>
            <person name="Gaasterland T."/>
            <person name="Young W.G."/>
            <person name="Lenox A.L."/>
            <person name="Graham D.E."/>
            <person name="Overbeek R."/>
            <person name="Snead M.A."/>
            <person name="Keller M."/>
            <person name="Aujay M."/>
            <person name="Huber R."/>
            <person name="Feldman R.A."/>
            <person name="Short J.M."/>
            <person name="Olsen G.J."/>
            <person name="Swanson R.V."/>
        </authorList>
    </citation>
    <scope>NUCLEOTIDE SEQUENCE [LARGE SCALE GENOMIC DNA]</scope>
    <source>
        <strain>VF5</strain>
    </source>
</reference>
<sequence length="318" mass="38424">MREEVERKIKEVLGVKEETLKYEGVFRRRKRKGAKEYEYLEAKFYDIEEKKIVNVHVPVKKENLVLELDRHWKESKKREKELEKRLKEIISEYKNPDLIREILERLLEEGIRREAKDYAYEKYKKEALELFERFKPYLIKLRRERLKRINLLQALYLLANVKEMFQEKEEELEKVMERAVKTILFRDQNQKLQSPLGVLKNDFFLPKETPYDFLLSRFLQAELEPVLEKLLKAEIEKEETQEAMGEIAEFLTELSEEAKSRVLKVFPSFSQFSKVLYREWKKSGQSLKDFLVDWKSFLEFKGKEAEKEVLNVLSKLNL</sequence>
<protein>
    <recommendedName>
        <fullName>Uncharacterized protein aq_aa11</fullName>
    </recommendedName>
</protein>
<name>YZ11_AQUAE</name>
<dbReference type="EMBL" id="AE000667">
    <property type="protein sequence ID" value="AAC07957.1"/>
    <property type="molecule type" value="Genomic_DNA"/>
</dbReference>
<dbReference type="RefSeq" id="NP_046405.1">
    <property type="nucleotide sequence ID" value="NC_001880.1"/>
</dbReference>
<dbReference type="RefSeq" id="WP_010890551.1">
    <property type="nucleotide sequence ID" value="NC_001880.1"/>
</dbReference>
<dbReference type="SMR" id="O66405"/>
<dbReference type="EnsemblBacteria" id="AAC07957">
    <property type="protein sequence ID" value="AAC07957"/>
    <property type="gene ID" value="aq_aa11"/>
</dbReference>
<dbReference type="KEGG" id="aae:aq_aa11"/>
<dbReference type="HOGENOM" id="CLU_876169_0_0_0"/>
<dbReference type="InParanoid" id="O66405"/>
<dbReference type="Proteomes" id="UP000000798">
    <property type="component" value="Plasmid ece1"/>
</dbReference>
<accession>O66405</accession>